<protein>
    <recommendedName>
        <fullName>Multidrug resistance-like ATP-binding protein MdlB</fullName>
        <ecNumber>7.6.2.2</ecNumber>
    </recommendedName>
</protein>
<reference key="1">
    <citation type="journal article" date="2003" name="Proc. Natl. Acad. Sci. U.S.A.">
        <title>Reductive genome evolution in Buchnera aphidicola.</title>
        <authorList>
            <person name="van Ham R.C.H.J."/>
            <person name="Kamerbeek J."/>
            <person name="Palacios C."/>
            <person name="Rausell C."/>
            <person name="Abascal F."/>
            <person name="Bastolla U."/>
            <person name="Fernandez J.M."/>
            <person name="Jimenez L."/>
            <person name="Postigo M."/>
            <person name="Silva F.J."/>
            <person name="Tamames J."/>
            <person name="Viguera E."/>
            <person name="Latorre A."/>
            <person name="Valencia A."/>
            <person name="Moran F."/>
            <person name="Moya A."/>
        </authorList>
    </citation>
    <scope>NUCLEOTIDE SEQUENCE [LARGE SCALE GENOMIC DNA]</scope>
    <source>
        <strain>Bp</strain>
    </source>
</reference>
<keyword id="KW-0067">ATP-binding</keyword>
<keyword id="KW-1003">Cell membrane</keyword>
<keyword id="KW-0472">Membrane</keyword>
<keyword id="KW-0547">Nucleotide-binding</keyword>
<keyword id="KW-1185">Reference proteome</keyword>
<keyword id="KW-1278">Translocase</keyword>
<keyword id="KW-0812">Transmembrane</keyword>
<keyword id="KW-1133">Transmembrane helix</keyword>
<keyword id="KW-0813">Transport</keyword>
<dbReference type="EC" id="7.6.2.2"/>
<dbReference type="EMBL" id="AE016826">
    <property type="protein sequence ID" value="AAO27134.1"/>
    <property type="molecule type" value="Genomic_DNA"/>
</dbReference>
<dbReference type="RefSeq" id="WP_011091535.1">
    <property type="nucleotide sequence ID" value="NC_004545.1"/>
</dbReference>
<dbReference type="SMR" id="Q89A96"/>
<dbReference type="STRING" id="224915.bbp_424"/>
<dbReference type="KEGG" id="bab:bbp_424"/>
<dbReference type="eggNOG" id="COG1132">
    <property type="taxonomic scope" value="Bacteria"/>
</dbReference>
<dbReference type="HOGENOM" id="CLU_000604_84_3_6"/>
<dbReference type="OrthoDB" id="9806127at2"/>
<dbReference type="Proteomes" id="UP000000601">
    <property type="component" value="Chromosome"/>
</dbReference>
<dbReference type="GO" id="GO:0005886">
    <property type="term" value="C:plasma membrane"/>
    <property type="evidence" value="ECO:0007669"/>
    <property type="project" value="UniProtKB-SubCell"/>
</dbReference>
<dbReference type="GO" id="GO:0015421">
    <property type="term" value="F:ABC-type oligopeptide transporter activity"/>
    <property type="evidence" value="ECO:0007669"/>
    <property type="project" value="TreeGrafter"/>
</dbReference>
<dbReference type="GO" id="GO:0008559">
    <property type="term" value="F:ABC-type xenobiotic transporter activity"/>
    <property type="evidence" value="ECO:0007669"/>
    <property type="project" value="UniProtKB-EC"/>
</dbReference>
<dbReference type="GO" id="GO:0005524">
    <property type="term" value="F:ATP binding"/>
    <property type="evidence" value="ECO:0007669"/>
    <property type="project" value="UniProtKB-KW"/>
</dbReference>
<dbReference type="GO" id="GO:0016887">
    <property type="term" value="F:ATP hydrolysis activity"/>
    <property type="evidence" value="ECO:0007669"/>
    <property type="project" value="InterPro"/>
</dbReference>
<dbReference type="CDD" id="cd18544">
    <property type="entry name" value="ABC_6TM_TmrA_like"/>
    <property type="match status" value="1"/>
</dbReference>
<dbReference type="FunFam" id="3.40.50.300:FF:000604">
    <property type="entry name" value="ABC transporter B family member 28"/>
    <property type="match status" value="1"/>
</dbReference>
<dbReference type="Gene3D" id="1.20.1560.10">
    <property type="entry name" value="ABC transporter type 1, transmembrane domain"/>
    <property type="match status" value="1"/>
</dbReference>
<dbReference type="Gene3D" id="3.40.50.300">
    <property type="entry name" value="P-loop containing nucleotide triphosphate hydrolases"/>
    <property type="match status" value="1"/>
</dbReference>
<dbReference type="InterPro" id="IPR003593">
    <property type="entry name" value="AAA+_ATPase"/>
</dbReference>
<dbReference type="InterPro" id="IPR011527">
    <property type="entry name" value="ABC1_TM_dom"/>
</dbReference>
<dbReference type="InterPro" id="IPR036640">
    <property type="entry name" value="ABC1_TM_sf"/>
</dbReference>
<dbReference type="InterPro" id="IPR003439">
    <property type="entry name" value="ABC_transporter-like_ATP-bd"/>
</dbReference>
<dbReference type="InterPro" id="IPR027417">
    <property type="entry name" value="P-loop_NTPase"/>
</dbReference>
<dbReference type="InterPro" id="IPR039421">
    <property type="entry name" value="Type_1_exporter"/>
</dbReference>
<dbReference type="PANTHER" id="PTHR43394:SF1">
    <property type="entry name" value="ATP-BINDING CASSETTE SUB-FAMILY B MEMBER 10, MITOCHONDRIAL"/>
    <property type="match status" value="1"/>
</dbReference>
<dbReference type="PANTHER" id="PTHR43394">
    <property type="entry name" value="ATP-DEPENDENT PERMEASE MDL1, MITOCHONDRIAL"/>
    <property type="match status" value="1"/>
</dbReference>
<dbReference type="Pfam" id="PF00664">
    <property type="entry name" value="ABC_membrane"/>
    <property type="match status" value="1"/>
</dbReference>
<dbReference type="Pfam" id="PF00005">
    <property type="entry name" value="ABC_tran"/>
    <property type="match status" value="1"/>
</dbReference>
<dbReference type="SMART" id="SM00382">
    <property type="entry name" value="AAA"/>
    <property type="match status" value="1"/>
</dbReference>
<dbReference type="SUPFAM" id="SSF90123">
    <property type="entry name" value="ABC transporter transmembrane region"/>
    <property type="match status" value="1"/>
</dbReference>
<dbReference type="SUPFAM" id="SSF52540">
    <property type="entry name" value="P-loop containing nucleoside triphosphate hydrolases"/>
    <property type="match status" value="1"/>
</dbReference>
<dbReference type="PROSITE" id="PS50929">
    <property type="entry name" value="ABC_TM1F"/>
    <property type="match status" value="1"/>
</dbReference>
<dbReference type="PROSITE" id="PS50893">
    <property type="entry name" value="ABC_TRANSPORTER_2"/>
    <property type="match status" value="1"/>
</dbReference>
<organism>
    <name type="scientific">Buchnera aphidicola subsp. Baizongia pistaciae (strain Bp)</name>
    <dbReference type="NCBI Taxonomy" id="224915"/>
    <lineage>
        <taxon>Bacteria</taxon>
        <taxon>Pseudomonadati</taxon>
        <taxon>Pseudomonadota</taxon>
        <taxon>Gammaproteobacteria</taxon>
        <taxon>Enterobacterales</taxon>
        <taxon>Erwiniaceae</taxon>
        <taxon>Buchnera</taxon>
    </lineage>
</organism>
<sequence length="578" mass="66827">MNNVIDFWPTLKRLLYYGTNVKKYLILGFTLLLFSSIFEVLNPILISCFIKHYFINNTVNYSLKIITYYLILQILAAILNYHQNIIFNKISLTVIQKLRYDVMSSTLQLPIKMFDQRPIGQFISRITNDTETIKELYDTVIKSLFQNIILILITLITMFILEWRMACIASIIFPIALIIMLLYQYFSKPILRKIKVYIANIYNIFNEIINGIDVIQQFHQEQKFRKSIKKISISHYYFRMKILKLDSFLLRPLLNFCSTLILCGLILIFGIYPIGFFEIGTLYAFITYLNRLNEPLITITSQQSIFQQAIVAGERIFEIIHTPKQQYGDDSLHFREGNIKVKNLYFSYTNNNVYVLKNINIFIPSKQFIAFVGRTGSGKSTLSKLLIGHYPATLGKICLDERNIQTFTHNVLKKNISIVQQDPIILNDTILENITLGRNISTKKVLKILKTIKLIQFVNSLPKGLKTLLGENGNILSIGQKQLLSIARTLISCPKILILDEATSNVDLDTENNIKKILSSVKHLTTIIAITHRLSTIKHADNIFVFNNGEIVESGTHYNLIRKKSYYKNMYYSQAIKN</sequence>
<accession>Q89A96</accession>
<name>MDLB_BUCBP</name>
<evidence type="ECO:0000255" key="1">
    <source>
        <dbReference type="PROSITE-ProRule" id="PRU00434"/>
    </source>
</evidence>
<evidence type="ECO:0000255" key="2">
    <source>
        <dbReference type="PROSITE-ProRule" id="PRU00441"/>
    </source>
</evidence>
<evidence type="ECO:0000305" key="3"/>
<comment type="catalytic activity">
    <reaction>
        <text>ATP + H2O + xenobioticSide 1 = ADP + phosphate + xenobioticSide 2.</text>
        <dbReference type="EC" id="7.6.2.2"/>
    </reaction>
</comment>
<comment type="subcellular location">
    <subcellularLocation>
        <location evidence="3">Cell membrane</location>
        <topology evidence="2">Multi-pass membrane protein</topology>
    </subcellularLocation>
</comment>
<comment type="similarity">
    <text evidence="3">Belongs to the ABC transporter superfamily. Drug exporter-2 (TC 3.A.1.117) family.</text>
</comment>
<feature type="chain" id="PRO_0000092501" description="Multidrug resistance-like ATP-binding protein MdlB">
    <location>
        <begin position="1"/>
        <end position="578"/>
    </location>
</feature>
<feature type="transmembrane region" description="Helical" evidence="2">
    <location>
        <begin position="26"/>
        <end position="46"/>
    </location>
</feature>
<feature type="transmembrane region" description="Helical" evidence="2">
    <location>
        <begin position="59"/>
        <end position="79"/>
    </location>
</feature>
<feature type="transmembrane region" description="Helical" evidence="2">
    <location>
        <begin position="143"/>
        <end position="163"/>
    </location>
</feature>
<feature type="transmembrane region" description="Helical" evidence="2">
    <location>
        <begin position="166"/>
        <end position="186"/>
    </location>
</feature>
<feature type="transmembrane region" description="Helical" evidence="2">
    <location>
        <begin position="196"/>
        <end position="216"/>
    </location>
</feature>
<feature type="transmembrane region" description="Helical" evidence="2">
    <location>
        <begin position="260"/>
        <end position="280"/>
    </location>
</feature>
<feature type="domain" description="ABC transmembrane type-1" evidence="2">
    <location>
        <begin position="25"/>
        <end position="308"/>
    </location>
</feature>
<feature type="domain" description="ABC transporter" evidence="1">
    <location>
        <begin position="339"/>
        <end position="573"/>
    </location>
</feature>
<feature type="binding site" evidence="1">
    <location>
        <begin position="373"/>
        <end position="380"/>
    </location>
    <ligand>
        <name>ATP</name>
        <dbReference type="ChEBI" id="CHEBI:30616"/>
    </ligand>
</feature>
<gene>
    <name type="primary">mdlB</name>
    <name type="ordered locus">bbp_424</name>
</gene>
<proteinExistence type="inferred from homology"/>